<comment type="similarity">
    <text evidence="1">Belongs to the UPF0173 family.</text>
</comment>
<reference key="1">
    <citation type="journal article" date="2015" name="Genome Announc.">
        <title>Complete Genome Sequence of Methanosphaerula palustris E1-9CT, a Hydrogenotrophic Methanogen Isolated from a Minerotrophic Fen Peatland.</title>
        <authorList>
            <person name="Cadillo-Quiroz H."/>
            <person name="Browne P."/>
            <person name="Kyrpides N."/>
            <person name="Woyke T."/>
            <person name="Goodwin L."/>
            <person name="Detter C."/>
            <person name="Yavitt J.B."/>
            <person name="Zinder S.H."/>
        </authorList>
    </citation>
    <scope>NUCLEOTIDE SEQUENCE [LARGE SCALE GENOMIC DNA]</scope>
    <source>
        <strain>ATCC BAA-1556 / DSM 19958 / E1-9c</strain>
    </source>
</reference>
<organism>
    <name type="scientific">Methanosphaerula palustris (strain ATCC BAA-1556 / DSM 19958 / E1-9c)</name>
    <dbReference type="NCBI Taxonomy" id="521011"/>
    <lineage>
        <taxon>Archaea</taxon>
        <taxon>Methanobacteriati</taxon>
        <taxon>Methanobacteriota</taxon>
        <taxon>Stenosarchaea group</taxon>
        <taxon>Methanomicrobia</taxon>
        <taxon>Methanomicrobiales</taxon>
        <taxon>Methanoregulaceae</taxon>
        <taxon>Methanosphaerula</taxon>
    </lineage>
</organism>
<sequence length="218" mass="23118">MRLTWPGHACVLLEGSQRVLIDPYVLNGTIPKDPDLVVLTHGHFDHFGETLTLDAPTVAVNDLAKALSALGMQATGLNFGGSITINGVTVSLTPAVHSVSMLELDGTKIMCGEAAGVVIRMDGVTVYHAGDTALFSDMRLIGELYHPDVALLPIGGRFTMDSAAAMMAAAYIGAPMVIPIHYNTWPAIEQDADAFKEAIERTTDMQVMVLPSGGSIEI</sequence>
<protein>
    <recommendedName>
        <fullName evidence="1">UPF0173 metal-dependent hydrolase Mpal_1063</fullName>
    </recommendedName>
</protein>
<accession>B8GH05</accession>
<feature type="chain" id="PRO_1000197821" description="UPF0173 metal-dependent hydrolase Mpal_1063">
    <location>
        <begin position="1"/>
        <end position="218"/>
    </location>
</feature>
<gene>
    <name type="ordered locus">Mpal_1063</name>
</gene>
<proteinExistence type="inferred from homology"/>
<dbReference type="EMBL" id="CP001338">
    <property type="protein sequence ID" value="ACL16410.1"/>
    <property type="molecule type" value="Genomic_DNA"/>
</dbReference>
<dbReference type="RefSeq" id="WP_012617729.1">
    <property type="nucleotide sequence ID" value="NC_011832.1"/>
</dbReference>
<dbReference type="SMR" id="B8GH05"/>
<dbReference type="STRING" id="521011.Mpal_1063"/>
<dbReference type="GeneID" id="7270979"/>
<dbReference type="KEGG" id="mpl:Mpal_1063"/>
<dbReference type="eggNOG" id="arCOG00497">
    <property type="taxonomic scope" value="Archaea"/>
</dbReference>
<dbReference type="HOGENOM" id="CLU_070010_4_1_2"/>
<dbReference type="OrthoDB" id="28313at2157"/>
<dbReference type="Proteomes" id="UP000002457">
    <property type="component" value="Chromosome"/>
</dbReference>
<dbReference type="GO" id="GO:0016787">
    <property type="term" value="F:hydrolase activity"/>
    <property type="evidence" value="ECO:0007669"/>
    <property type="project" value="UniProtKB-UniRule"/>
</dbReference>
<dbReference type="Gene3D" id="3.60.15.10">
    <property type="entry name" value="Ribonuclease Z/Hydroxyacylglutathione hydrolase-like"/>
    <property type="match status" value="1"/>
</dbReference>
<dbReference type="HAMAP" id="MF_00457">
    <property type="entry name" value="UPF0173"/>
    <property type="match status" value="1"/>
</dbReference>
<dbReference type="InterPro" id="IPR001279">
    <property type="entry name" value="Metallo-B-lactamas"/>
</dbReference>
<dbReference type="InterPro" id="IPR036866">
    <property type="entry name" value="RibonucZ/Hydroxyglut_hydro"/>
</dbReference>
<dbReference type="InterPro" id="IPR022877">
    <property type="entry name" value="UPF0173"/>
</dbReference>
<dbReference type="InterPro" id="IPR050114">
    <property type="entry name" value="UPF0173_UPF0282_UlaG_hydrolase"/>
</dbReference>
<dbReference type="NCBIfam" id="NF001911">
    <property type="entry name" value="PRK00685.1"/>
    <property type="match status" value="1"/>
</dbReference>
<dbReference type="PANTHER" id="PTHR43546:SF3">
    <property type="entry name" value="UPF0173 METAL-DEPENDENT HYDROLASE MJ1163"/>
    <property type="match status" value="1"/>
</dbReference>
<dbReference type="PANTHER" id="PTHR43546">
    <property type="entry name" value="UPF0173 METAL-DEPENDENT HYDROLASE MJ1163-RELATED"/>
    <property type="match status" value="1"/>
</dbReference>
<dbReference type="Pfam" id="PF13483">
    <property type="entry name" value="Lactamase_B_3"/>
    <property type="match status" value="1"/>
</dbReference>
<dbReference type="SMART" id="SM00849">
    <property type="entry name" value="Lactamase_B"/>
    <property type="match status" value="1"/>
</dbReference>
<dbReference type="SUPFAM" id="SSF56281">
    <property type="entry name" value="Metallo-hydrolase/oxidoreductase"/>
    <property type="match status" value="1"/>
</dbReference>
<name>Y1063_METPE</name>
<evidence type="ECO:0000255" key="1">
    <source>
        <dbReference type="HAMAP-Rule" id="MF_00457"/>
    </source>
</evidence>
<keyword id="KW-0378">Hydrolase</keyword>
<keyword id="KW-1185">Reference proteome</keyword>